<name>DCUP_RHOCA</name>
<protein>
    <recommendedName>
        <fullName evidence="1">Uroporphyrinogen decarboxylase</fullName>
        <shortName evidence="1">UPD</shortName>
        <shortName evidence="1">URO-D</shortName>
        <ecNumber evidence="1">4.1.1.37</ecNumber>
    </recommendedName>
</protein>
<proteinExistence type="inferred from homology"/>
<accession>P42503</accession>
<evidence type="ECO:0000255" key="1">
    <source>
        <dbReference type="HAMAP-Rule" id="MF_00218"/>
    </source>
</evidence>
<sequence length="344" mass="37498">MTDKTILRALKGEVLPTPPVWLMRQAGRYLPEYRATRAQAGDFLSLCYTPDLAAEVTLQPIRRYGFDAAILFADILLLPQALGLDLWFETGEGPRMSTVTSMEGVKGLKGKDDIHDKLAPVYETCKILSRELPKETTFIGFAGMPWTVATYMIAGRGSKDQAAAHKFKDTDRAAFSALIDAVTVATIEYLSKQVEAGCEVVKLFDSWAGSLKGQDFEDFAVEPARVITAEMKRRFPGLPVIAFPREAGQGYIGFAEKTGADCVAIDNSVSPDWAAENVQKGKTCVQGNLDPSYMVTGGQELVEATKKVVAAFKNGPHIFNLGHGITPEANPDNVTLLMETIRKG</sequence>
<feature type="chain" id="PRO_0000187631" description="Uroporphyrinogen decarboxylase">
    <location>
        <begin position="1"/>
        <end position="344"/>
    </location>
</feature>
<feature type="binding site" evidence="1">
    <location>
        <begin position="24"/>
        <end position="28"/>
    </location>
    <ligand>
        <name>substrate</name>
    </ligand>
</feature>
<feature type="binding site" evidence="1">
    <location>
        <position position="43"/>
    </location>
    <ligand>
        <name>substrate</name>
    </ligand>
</feature>
<feature type="binding site" evidence="1">
    <location>
        <position position="74"/>
    </location>
    <ligand>
        <name>substrate</name>
    </ligand>
</feature>
<feature type="binding site" evidence="1">
    <location>
        <position position="151"/>
    </location>
    <ligand>
        <name>substrate</name>
    </ligand>
</feature>
<feature type="binding site" evidence="1">
    <location>
        <position position="206"/>
    </location>
    <ligand>
        <name>substrate</name>
    </ligand>
</feature>
<feature type="binding site" evidence="1">
    <location>
        <position position="323"/>
    </location>
    <ligand>
        <name>substrate</name>
    </ligand>
</feature>
<feature type="site" description="Transition state stabilizer" evidence="1">
    <location>
        <position position="74"/>
    </location>
</feature>
<gene>
    <name evidence="1" type="primary">hemE</name>
</gene>
<keyword id="KW-0963">Cytoplasm</keyword>
<keyword id="KW-0210">Decarboxylase</keyword>
<keyword id="KW-0456">Lyase</keyword>
<keyword id="KW-0627">Porphyrin biosynthesis</keyword>
<dbReference type="EC" id="4.1.1.37" evidence="1"/>
<dbReference type="EMBL" id="U16796">
    <property type="protein sequence ID" value="AAA97435.1"/>
    <property type="molecule type" value="Genomic_DNA"/>
</dbReference>
<dbReference type="RefSeq" id="WP_013066909.1">
    <property type="nucleotide sequence ID" value="NZ_VIBE01000002.1"/>
</dbReference>
<dbReference type="SMR" id="P42503"/>
<dbReference type="GeneID" id="31490084"/>
<dbReference type="OMA" id="LWLMRQA"/>
<dbReference type="UniPathway" id="UPA00251">
    <property type="reaction ID" value="UER00321"/>
</dbReference>
<dbReference type="GO" id="GO:0005829">
    <property type="term" value="C:cytosol"/>
    <property type="evidence" value="ECO:0007669"/>
    <property type="project" value="TreeGrafter"/>
</dbReference>
<dbReference type="GO" id="GO:0004853">
    <property type="term" value="F:uroporphyrinogen decarboxylase activity"/>
    <property type="evidence" value="ECO:0007669"/>
    <property type="project" value="UniProtKB-UniRule"/>
</dbReference>
<dbReference type="GO" id="GO:0019353">
    <property type="term" value="P:protoporphyrinogen IX biosynthetic process from glutamate"/>
    <property type="evidence" value="ECO:0007669"/>
    <property type="project" value="TreeGrafter"/>
</dbReference>
<dbReference type="CDD" id="cd00717">
    <property type="entry name" value="URO-D"/>
    <property type="match status" value="1"/>
</dbReference>
<dbReference type="Gene3D" id="3.20.20.210">
    <property type="match status" value="1"/>
</dbReference>
<dbReference type="HAMAP" id="MF_00218">
    <property type="entry name" value="URO_D"/>
    <property type="match status" value="1"/>
</dbReference>
<dbReference type="InterPro" id="IPR038071">
    <property type="entry name" value="UROD/MetE-like_sf"/>
</dbReference>
<dbReference type="InterPro" id="IPR006361">
    <property type="entry name" value="Uroporphyrinogen_deCO2ase_HemE"/>
</dbReference>
<dbReference type="InterPro" id="IPR000257">
    <property type="entry name" value="Uroporphyrinogen_deCOase"/>
</dbReference>
<dbReference type="NCBIfam" id="TIGR01464">
    <property type="entry name" value="hemE"/>
    <property type="match status" value="1"/>
</dbReference>
<dbReference type="PANTHER" id="PTHR21091">
    <property type="entry name" value="METHYLTETRAHYDROFOLATE:HOMOCYSTEINE METHYLTRANSFERASE RELATED"/>
    <property type="match status" value="1"/>
</dbReference>
<dbReference type="PANTHER" id="PTHR21091:SF169">
    <property type="entry name" value="UROPORPHYRINOGEN DECARBOXYLASE"/>
    <property type="match status" value="1"/>
</dbReference>
<dbReference type="Pfam" id="PF01208">
    <property type="entry name" value="URO-D"/>
    <property type="match status" value="1"/>
</dbReference>
<dbReference type="SUPFAM" id="SSF51726">
    <property type="entry name" value="UROD/MetE-like"/>
    <property type="match status" value="1"/>
</dbReference>
<dbReference type="PROSITE" id="PS00906">
    <property type="entry name" value="UROD_1"/>
    <property type="match status" value="1"/>
</dbReference>
<dbReference type="PROSITE" id="PS00907">
    <property type="entry name" value="UROD_2"/>
    <property type="match status" value="1"/>
</dbReference>
<reference key="1">
    <citation type="journal article" date="1995" name="Plant Physiol.">
        <title>Nucleotide sequence of the Rhodobacter capsulatus hemE gene.</title>
        <authorList>
            <person name="Ineichen G."/>
            <person name="Biel A.J."/>
        </authorList>
    </citation>
    <scope>NUCLEOTIDE SEQUENCE [GENOMIC DNA]</scope>
    <source>
        <strain>PAS100</strain>
    </source>
</reference>
<comment type="function">
    <text evidence="1">Catalyzes the decarboxylation of four acetate groups of uroporphyrinogen-III to yield coproporphyrinogen-III.</text>
</comment>
<comment type="catalytic activity">
    <reaction evidence="1">
        <text>uroporphyrinogen III + 4 H(+) = coproporphyrinogen III + 4 CO2</text>
        <dbReference type="Rhea" id="RHEA:19865"/>
        <dbReference type="ChEBI" id="CHEBI:15378"/>
        <dbReference type="ChEBI" id="CHEBI:16526"/>
        <dbReference type="ChEBI" id="CHEBI:57308"/>
        <dbReference type="ChEBI" id="CHEBI:57309"/>
        <dbReference type="EC" id="4.1.1.37"/>
    </reaction>
</comment>
<comment type="pathway">
    <text evidence="1">Porphyrin-containing compound metabolism; protoporphyrin-IX biosynthesis; coproporphyrinogen-III from 5-aminolevulinate: step 4/4.</text>
</comment>
<comment type="subunit">
    <text evidence="1">Homodimer.</text>
</comment>
<comment type="subcellular location">
    <subcellularLocation>
        <location evidence="1">Cytoplasm</location>
    </subcellularLocation>
</comment>
<comment type="similarity">
    <text evidence="1">Belongs to the uroporphyrinogen decarboxylase family.</text>
</comment>
<organism>
    <name type="scientific">Rhodobacter capsulatus</name>
    <name type="common">Rhodopseudomonas capsulata</name>
    <dbReference type="NCBI Taxonomy" id="1061"/>
    <lineage>
        <taxon>Bacteria</taxon>
        <taxon>Pseudomonadati</taxon>
        <taxon>Pseudomonadota</taxon>
        <taxon>Alphaproteobacteria</taxon>
        <taxon>Rhodobacterales</taxon>
        <taxon>Rhodobacter group</taxon>
        <taxon>Rhodobacter</taxon>
    </lineage>
</organism>